<name>ILVC_BACCN</name>
<keyword id="KW-0028">Amino-acid biosynthesis</keyword>
<keyword id="KW-0100">Branched-chain amino acid biosynthesis</keyword>
<keyword id="KW-0460">Magnesium</keyword>
<keyword id="KW-0479">Metal-binding</keyword>
<keyword id="KW-0521">NADP</keyword>
<keyword id="KW-0560">Oxidoreductase</keyword>
<proteinExistence type="inferred from homology"/>
<protein>
    <recommendedName>
        <fullName evidence="1">Ketol-acid reductoisomerase (NADP(+))</fullName>
        <shortName evidence="1">KARI</shortName>
        <ecNumber evidence="1">1.1.1.86</ecNumber>
    </recommendedName>
    <alternativeName>
        <fullName evidence="1">Acetohydroxy-acid isomeroreductase</fullName>
        <shortName evidence="1">AHIR</shortName>
    </alternativeName>
    <alternativeName>
        <fullName evidence="1">Alpha-keto-beta-hydroxylacyl reductoisomerase</fullName>
    </alternativeName>
    <alternativeName>
        <fullName evidence="1">Ketol-acid reductoisomerase type 1</fullName>
    </alternativeName>
    <alternativeName>
        <fullName evidence="1">Ketol-acid reductoisomerase type I</fullName>
    </alternativeName>
</protein>
<gene>
    <name evidence="1" type="primary">ilvC</name>
    <name type="ordered locus">Bcer98_1122</name>
</gene>
<evidence type="ECO:0000255" key="1">
    <source>
        <dbReference type="HAMAP-Rule" id="MF_00435"/>
    </source>
</evidence>
<evidence type="ECO:0000255" key="2">
    <source>
        <dbReference type="PROSITE-ProRule" id="PRU01197"/>
    </source>
</evidence>
<evidence type="ECO:0000255" key="3">
    <source>
        <dbReference type="PROSITE-ProRule" id="PRU01198"/>
    </source>
</evidence>
<organism>
    <name type="scientific">Bacillus cytotoxicus (strain DSM 22905 / CIP 110041 / 391-98 / NVH 391-98)</name>
    <dbReference type="NCBI Taxonomy" id="315749"/>
    <lineage>
        <taxon>Bacteria</taxon>
        <taxon>Bacillati</taxon>
        <taxon>Bacillota</taxon>
        <taxon>Bacilli</taxon>
        <taxon>Bacillales</taxon>
        <taxon>Bacillaceae</taxon>
        <taxon>Bacillus</taxon>
        <taxon>Bacillus cereus group</taxon>
    </lineage>
</organism>
<sequence length="336" mass="36751">MAKVYYEKDVMVNVLKGKKVAIVGYGSQGHAHAQNLRDNNFDVVVGLRKGKSWEKAKEDGFSVYSVAEAAAMADVVMVLLPDELQPEVYQAEIESNLQSGNALVFAHGFNVHFNQVTPPEDVDVFLVAPKGPGHLVRRTFTEGGAVPALFAVYQDATGTATEKALSYADGIGATRAGVLETTFKEETETDLFGEQAVLCGGVTALVKAGFETLVDAGYQPELAYFECLHELKLIVDLMYEGGLENMRYSVSDTAQWGDFVSGPRVVTEHTKKAMGDVLKEIQDGTFAKGWIAEHQAGRPHFHAINAKENEHQIEVVGRQLREMMPFVKPKVKTGVK</sequence>
<reference key="1">
    <citation type="journal article" date="2008" name="Chem. Biol. Interact.">
        <title>Extending the Bacillus cereus group genomics to putative food-borne pathogens of different toxicity.</title>
        <authorList>
            <person name="Lapidus A."/>
            <person name="Goltsman E."/>
            <person name="Auger S."/>
            <person name="Galleron N."/>
            <person name="Segurens B."/>
            <person name="Dossat C."/>
            <person name="Land M.L."/>
            <person name="Broussolle V."/>
            <person name="Brillard J."/>
            <person name="Guinebretiere M.-H."/>
            <person name="Sanchis V."/>
            <person name="Nguen-the C."/>
            <person name="Lereclus D."/>
            <person name="Richardson P."/>
            <person name="Wincker P."/>
            <person name="Weissenbach J."/>
            <person name="Ehrlich S.D."/>
            <person name="Sorokin A."/>
        </authorList>
    </citation>
    <scope>NUCLEOTIDE SEQUENCE [LARGE SCALE GENOMIC DNA]</scope>
    <source>
        <strain>DSM 22905 / CIP 110041 / 391-98 / NVH 391-98</strain>
    </source>
</reference>
<feature type="chain" id="PRO_1000080617" description="Ketol-acid reductoisomerase (NADP(+))">
    <location>
        <begin position="1"/>
        <end position="336"/>
    </location>
</feature>
<feature type="domain" description="KARI N-terminal Rossmann" evidence="2">
    <location>
        <begin position="2"/>
        <end position="181"/>
    </location>
</feature>
<feature type="domain" description="KARI C-terminal knotted" evidence="3">
    <location>
        <begin position="182"/>
        <end position="327"/>
    </location>
</feature>
<feature type="active site" evidence="1">
    <location>
        <position position="107"/>
    </location>
</feature>
<feature type="binding site" evidence="1">
    <location>
        <begin position="25"/>
        <end position="28"/>
    </location>
    <ligand>
        <name>NADP(+)</name>
        <dbReference type="ChEBI" id="CHEBI:58349"/>
    </ligand>
</feature>
<feature type="binding site" evidence="1">
    <location>
        <position position="48"/>
    </location>
    <ligand>
        <name>NADP(+)</name>
        <dbReference type="ChEBI" id="CHEBI:58349"/>
    </ligand>
</feature>
<feature type="binding site" evidence="1">
    <location>
        <position position="52"/>
    </location>
    <ligand>
        <name>NADP(+)</name>
        <dbReference type="ChEBI" id="CHEBI:58349"/>
    </ligand>
</feature>
<feature type="binding site" evidence="1">
    <location>
        <begin position="82"/>
        <end position="85"/>
    </location>
    <ligand>
        <name>NADP(+)</name>
        <dbReference type="ChEBI" id="CHEBI:58349"/>
    </ligand>
</feature>
<feature type="binding site" evidence="1">
    <location>
        <position position="133"/>
    </location>
    <ligand>
        <name>NADP(+)</name>
        <dbReference type="ChEBI" id="CHEBI:58349"/>
    </ligand>
</feature>
<feature type="binding site" evidence="1">
    <location>
        <position position="190"/>
    </location>
    <ligand>
        <name>Mg(2+)</name>
        <dbReference type="ChEBI" id="CHEBI:18420"/>
        <label>1</label>
    </ligand>
</feature>
<feature type="binding site" evidence="1">
    <location>
        <position position="190"/>
    </location>
    <ligand>
        <name>Mg(2+)</name>
        <dbReference type="ChEBI" id="CHEBI:18420"/>
        <label>2</label>
    </ligand>
</feature>
<feature type="binding site" evidence="1">
    <location>
        <position position="194"/>
    </location>
    <ligand>
        <name>Mg(2+)</name>
        <dbReference type="ChEBI" id="CHEBI:18420"/>
        <label>1</label>
    </ligand>
</feature>
<feature type="binding site" evidence="1">
    <location>
        <position position="226"/>
    </location>
    <ligand>
        <name>Mg(2+)</name>
        <dbReference type="ChEBI" id="CHEBI:18420"/>
        <label>2</label>
    </ligand>
</feature>
<feature type="binding site" evidence="1">
    <location>
        <position position="230"/>
    </location>
    <ligand>
        <name>Mg(2+)</name>
        <dbReference type="ChEBI" id="CHEBI:18420"/>
        <label>2</label>
    </ligand>
</feature>
<feature type="binding site" evidence="1">
    <location>
        <position position="251"/>
    </location>
    <ligand>
        <name>substrate</name>
    </ligand>
</feature>
<accession>A7GMU0</accession>
<comment type="function">
    <text evidence="1">Involved in the biosynthesis of branched-chain amino acids (BCAA). Catalyzes an alkyl-migration followed by a ketol-acid reduction of (S)-2-acetolactate (S2AL) to yield (R)-2,3-dihydroxy-isovalerate. In the isomerase reaction, S2AL is rearranged via a Mg-dependent methyl migration to produce 3-hydroxy-3-methyl-2-ketobutyrate (HMKB). In the reductase reaction, this 2-ketoacid undergoes a metal-dependent reduction by NADPH to yield (R)-2,3-dihydroxy-isovalerate.</text>
</comment>
<comment type="catalytic activity">
    <reaction evidence="1">
        <text>(2R)-2,3-dihydroxy-3-methylbutanoate + NADP(+) = (2S)-2-acetolactate + NADPH + H(+)</text>
        <dbReference type="Rhea" id="RHEA:22068"/>
        <dbReference type="ChEBI" id="CHEBI:15378"/>
        <dbReference type="ChEBI" id="CHEBI:49072"/>
        <dbReference type="ChEBI" id="CHEBI:57783"/>
        <dbReference type="ChEBI" id="CHEBI:58349"/>
        <dbReference type="ChEBI" id="CHEBI:58476"/>
        <dbReference type="EC" id="1.1.1.86"/>
    </reaction>
</comment>
<comment type="catalytic activity">
    <reaction evidence="1">
        <text>(2R,3R)-2,3-dihydroxy-3-methylpentanoate + NADP(+) = (S)-2-ethyl-2-hydroxy-3-oxobutanoate + NADPH + H(+)</text>
        <dbReference type="Rhea" id="RHEA:13493"/>
        <dbReference type="ChEBI" id="CHEBI:15378"/>
        <dbReference type="ChEBI" id="CHEBI:49256"/>
        <dbReference type="ChEBI" id="CHEBI:49258"/>
        <dbReference type="ChEBI" id="CHEBI:57783"/>
        <dbReference type="ChEBI" id="CHEBI:58349"/>
        <dbReference type="EC" id="1.1.1.86"/>
    </reaction>
</comment>
<comment type="cofactor">
    <cofactor evidence="1">
        <name>Mg(2+)</name>
        <dbReference type="ChEBI" id="CHEBI:18420"/>
    </cofactor>
    <text evidence="1">Binds 2 magnesium ions per subunit.</text>
</comment>
<comment type="pathway">
    <text evidence="1">Amino-acid biosynthesis; L-isoleucine biosynthesis; L-isoleucine from 2-oxobutanoate: step 2/4.</text>
</comment>
<comment type="pathway">
    <text evidence="1">Amino-acid biosynthesis; L-valine biosynthesis; L-valine from pyruvate: step 2/4.</text>
</comment>
<comment type="similarity">
    <text evidence="1">Belongs to the ketol-acid reductoisomerase family.</text>
</comment>
<dbReference type="EC" id="1.1.1.86" evidence="1"/>
<dbReference type="EMBL" id="CP000764">
    <property type="protein sequence ID" value="ABS21448.1"/>
    <property type="molecule type" value="Genomic_DNA"/>
</dbReference>
<dbReference type="RefSeq" id="WP_011984201.1">
    <property type="nucleotide sequence ID" value="NC_009674.1"/>
</dbReference>
<dbReference type="SMR" id="A7GMU0"/>
<dbReference type="STRING" id="315749.Bcer98_1122"/>
<dbReference type="GeneID" id="33896478"/>
<dbReference type="KEGG" id="bcy:Bcer98_1122"/>
<dbReference type="eggNOG" id="COG0059">
    <property type="taxonomic scope" value="Bacteria"/>
</dbReference>
<dbReference type="HOGENOM" id="CLU_033821_0_1_9"/>
<dbReference type="OrthoDB" id="9804088at2"/>
<dbReference type="UniPathway" id="UPA00047">
    <property type="reaction ID" value="UER00056"/>
</dbReference>
<dbReference type="UniPathway" id="UPA00049">
    <property type="reaction ID" value="UER00060"/>
</dbReference>
<dbReference type="Proteomes" id="UP000002300">
    <property type="component" value="Chromosome"/>
</dbReference>
<dbReference type="GO" id="GO:0005829">
    <property type="term" value="C:cytosol"/>
    <property type="evidence" value="ECO:0007669"/>
    <property type="project" value="TreeGrafter"/>
</dbReference>
<dbReference type="GO" id="GO:0004455">
    <property type="term" value="F:ketol-acid reductoisomerase activity"/>
    <property type="evidence" value="ECO:0007669"/>
    <property type="project" value="UniProtKB-UniRule"/>
</dbReference>
<dbReference type="GO" id="GO:0000287">
    <property type="term" value="F:magnesium ion binding"/>
    <property type="evidence" value="ECO:0007669"/>
    <property type="project" value="UniProtKB-UniRule"/>
</dbReference>
<dbReference type="GO" id="GO:0050661">
    <property type="term" value="F:NADP binding"/>
    <property type="evidence" value="ECO:0007669"/>
    <property type="project" value="InterPro"/>
</dbReference>
<dbReference type="GO" id="GO:0009097">
    <property type="term" value="P:isoleucine biosynthetic process"/>
    <property type="evidence" value="ECO:0007669"/>
    <property type="project" value="UniProtKB-UniRule"/>
</dbReference>
<dbReference type="GO" id="GO:0009099">
    <property type="term" value="P:L-valine biosynthetic process"/>
    <property type="evidence" value="ECO:0007669"/>
    <property type="project" value="UniProtKB-UniRule"/>
</dbReference>
<dbReference type="FunFam" id="3.40.50.720:FF:000023">
    <property type="entry name" value="Ketol-acid reductoisomerase (NADP(+))"/>
    <property type="match status" value="1"/>
</dbReference>
<dbReference type="Gene3D" id="6.10.240.10">
    <property type="match status" value="1"/>
</dbReference>
<dbReference type="Gene3D" id="3.40.50.720">
    <property type="entry name" value="NAD(P)-binding Rossmann-like Domain"/>
    <property type="match status" value="1"/>
</dbReference>
<dbReference type="HAMAP" id="MF_00435">
    <property type="entry name" value="IlvC"/>
    <property type="match status" value="1"/>
</dbReference>
<dbReference type="InterPro" id="IPR008927">
    <property type="entry name" value="6-PGluconate_DH-like_C_sf"/>
</dbReference>
<dbReference type="InterPro" id="IPR013023">
    <property type="entry name" value="KARI"/>
</dbReference>
<dbReference type="InterPro" id="IPR000506">
    <property type="entry name" value="KARI_C"/>
</dbReference>
<dbReference type="InterPro" id="IPR013116">
    <property type="entry name" value="KARI_N"/>
</dbReference>
<dbReference type="InterPro" id="IPR014359">
    <property type="entry name" value="KARI_prok"/>
</dbReference>
<dbReference type="InterPro" id="IPR036291">
    <property type="entry name" value="NAD(P)-bd_dom_sf"/>
</dbReference>
<dbReference type="NCBIfam" id="TIGR00465">
    <property type="entry name" value="ilvC"/>
    <property type="match status" value="1"/>
</dbReference>
<dbReference type="NCBIfam" id="NF004017">
    <property type="entry name" value="PRK05479.1"/>
    <property type="match status" value="1"/>
</dbReference>
<dbReference type="NCBIfam" id="NF009940">
    <property type="entry name" value="PRK13403.1"/>
    <property type="match status" value="1"/>
</dbReference>
<dbReference type="PANTHER" id="PTHR21371">
    <property type="entry name" value="KETOL-ACID REDUCTOISOMERASE, MITOCHONDRIAL"/>
    <property type="match status" value="1"/>
</dbReference>
<dbReference type="PANTHER" id="PTHR21371:SF1">
    <property type="entry name" value="KETOL-ACID REDUCTOISOMERASE, MITOCHONDRIAL"/>
    <property type="match status" value="1"/>
</dbReference>
<dbReference type="Pfam" id="PF01450">
    <property type="entry name" value="KARI_C"/>
    <property type="match status" value="1"/>
</dbReference>
<dbReference type="Pfam" id="PF07991">
    <property type="entry name" value="KARI_N"/>
    <property type="match status" value="1"/>
</dbReference>
<dbReference type="PIRSF" id="PIRSF000116">
    <property type="entry name" value="IlvC_gammaproteo"/>
    <property type="match status" value="1"/>
</dbReference>
<dbReference type="SUPFAM" id="SSF48179">
    <property type="entry name" value="6-phosphogluconate dehydrogenase C-terminal domain-like"/>
    <property type="match status" value="1"/>
</dbReference>
<dbReference type="SUPFAM" id="SSF51735">
    <property type="entry name" value="NAD(P)-binding Rossmann-fold domains"/>
    <property type="match status" value="1"/>
</dbReference>
<dbReference type="PROSITE" id="PS51851">
    <property type="entry name" value="KARI_C"/>
    <property type="match status" value="1"/>
</dbReference>
<dbReference type="PROSITE" id="PS51850">
    <property type="entry name" value="KARI_N"/>
    <property type="match status" value="1"/>
</dbReference>